<accession>Q3AZ61</accession>
<sequence>MSLISRLRAVVAGDDYLDGELDDFAYEDEQQDQDQRATQADGGALATLGDSNPFDLGGDLPGSNVIGMPGISTAAAEVNLMEPRSFDEMPRAIQALRERKTVILNLTMMEPDQAQRAVDFVAGGTFAIDGHQERVGESIFLFAPSCVTVTNASQDETSAPTVVSREIDVAEPSESASAPSPAWGAAAL</sequence>
<reference key="1">
    <citation type="submission" date="2005-08" db="EMBL/GenBank/DDBJ databases">
        <title>Complete sequence of Synechococcus sp. CC9902.</title>
        <authorList>
            <person name="Copeland A."/>
            <person name="Lucas S."/>
            <person name="Lapidus A."/>
            <person name="Barry K."/>
            <person name="Detter J.C."/>
            <person name="Glavina T."/>
            <person name="Hammon N."/>
            <person name="Israni S."/>
            <person name="Pitluck S."/>
            <person name="Martinez M."/>
            <person name="Schmutz J."/>
            <person name="Larimer F."/>
            <person name="Land M."/>
            <person name="Kyrpides N."/>
            <person name="Ivanova N."/>
            <person name="Richardson P."/>
        </authorList>
    </citation>
    <scope>NUCLEOTIDE SEQUENCE [LARGE SCALE GENOMIC DNA]</scope>
    <source>
        <strain>CC9902</strain>
    </source>
</reference>
<keyword id="KW-0131">Cell cycle</keyword>
<keyword id="KW-0132">Cell division</keyword>
<keyword id="KW-0963">Cytoplasm</keyword>
<keyword id="KW-1185">Reference proteome</keyword>
<keyword id="KW-0717">Septation</keyword>
<organism>
    <name type="scientific">Synechococcus sp. (strain CC9902)</name>
    <dbReference type="NCBI Taxonomy" id="316279"/>
    <lineage>
        <taxon>Bacteria</taxon>
        <taxon>Bacillati</taxon>
        <taxon>Cyanobacteriota</taxon>
        <taxon>Cyanophyceae</taxon>
        <taxon>Synechococcales</taxon>
        <taxon>Synechococcaceae</taxon>
        <taxon>Synechococcus</taxon>
    </lineage>
</organism>
<feature type="chain" id="PRO_0000334125" description="Cell division protein SepF">
    <location>
        <begin position="1"/>
        <end position="188"/>
    </location>
</feature>
<feature type="region of interest" description="Disordered" evidence="2">
    <location>
        <begin position="29"/>
        <end position="53"/>
    </location>
</feature>
<comment type="function">
    <text evidence="1">Cell division protein that is part of the divisome complex and is recruited early to the Z-ring. Probably stimulates Z-ring formation, perhaps through the cross-linking of FtsZ protofilaments. Its function overlaps with FtsA.</text>
</comment>
<comment type="subunit">
    <text evidence="1">Homodimer. Interacts with FtsZ.</text>
</comment>
<comment type="subcellular location">
    <subcellularLocation>
        <location evidence="1">Cytoplasm</location>
    </subcellularLocation>
    <text evidence="1">Localizes to the division site, in a FtsZ-dependent manner.</text>
</comment>
<comment type="similarity">
    <text evidence="1">Belongs to the SepF family.</text>
</comment>
<name>SEPF_SYNS9</name>
<evidence type="ECO:0000255" key="1">
    <source>
        <dbReference type="HAMAP-Rule" id="MF_01197"/>
    </source>
</evidence>
<evidence type="ECO:0000256" key="2">
    <source>
        <dbReference type="SAM" id="MobiDB-lite"/>
    </source>
</evidence>
<proteinExistence type="inferred from homology"/>
<protein>
    <recommendedName>
        <fullName evidence="1">Cell division protein SepF</fullName>
    </recommendedName>
</protein>
<dbReference type="EMBL" id="CP000097">
    <property type="protein sequence ID" value="ABB25616.1"/>
    <property type="molecule type" value="Genomic_DNA"/>
</dbReference>
<dbReference type="RefSeq" id="WP_011359460.1">
    <property type="nucleotide sequence ID" value="NC_007513.1"/>
</dbReference>
<dbReference type="SMR" id="Q3AZ61"/>
<dbReference type="STRING" id="316279.Syncc9902_0648"/>
<dbReference type="KEGG" id="sye:Syncc9902_0648"/>
<dbReference type="eggNOG" id="COG1799">
    <property type="taxonomic scope" value="Bacteria"/>
</dbReference>
<dbReference type="HOGENOM" id="CLU_078499_1_0_3"/>
<dbReference type="OrthoDB" id="9815206at2"/>
<dbReference type="Proteomes" id="UP000002712">
    <property type="component" value="Chromosome"/>
</dbReference>
<dbReference type="GO" id="GO:0005737">
    <property type="term" value="C:cytoplasm"/>
    <property type="evidence" value="ECO:0007669"/>
    <property type="project" value="UniProtKB-SubCell"/>
</dbReference>
<dbReference type="GO" id="GO:0000917">
    <property type="term" value="P:division septum assembly"/>
    <property type="evidence" value="ECO:0007669"/>
    <property type="project" value="UniProtKB-KW"/>
</dbReference>
<dbReference type="GO" id="GO:0043093">
    <property type="term" value="P:FtsZ-dependent cytokinesis"/>
    <property type="evidence" value="ECO:0007669"/>
    <property type="project" value="UniProtKB-UniRule"/>
</dbReference>
<dbReference type="Gene3D" id="3.30.110.150">
    <property type="entry name" value="SepF-like protein"/>
    <property type="match status" value="1"/>
</dbReference>
<dbReference type="HAMAP" id="MF_01197">
    <property type="entry name" value="SepF"/>
    <property type="match status" value="1"/>
</dbReference>
<dbReference type="InterPro" id="IPR023052">
    <property type="entry name" value="Cell_div_SepF"/>
</dbReference>
<dbReference type="InterPro" id="IPR007561">
    <property type="entry name" value="Cell_div_SepF/SepF-rel"/>
</dbReference>
<dbReference type="InterPro" id="IPR038594">
    <property type="entry name" value="SepF-like_sf"/>
</dbReference>
<dbReference type="PANTHER" id="PTHR35798">
    <property type="entry name" value="CELL DIVISION PROTEIN SEPF"/>
    <property type="match status" value="1"/>
</dbReference>
<dbReference type="PANTHER" id="PTHR35798:SF1">
    <property type="entry name" value="CELL DIVISION PROTEIN SEPF"/>
    <property type="match status" value="1"/>
</dbReference>
<dbReference type="Pfam" id="PF04472">
    <property type="entry name" value="SepF"/>
    <property type="match status" value="1"/>
</dbReference>
<gene>
    <name evidence="1" type="primary">sepF</name>
    <name type="ordered locus">Syncc9902_0648</name>
</gene>